<sequence>MPIITLPDGNQRQFDNTTSIMEIAADIGPGLAKACIAGRVDGQLVDACDPIEKDANIAIITAKDDQGLEILRHSCAHLLGHAIKQLYPNAKMAIGPTIENGFYYDIDLDVTINDDELAKIAKRMNELVKTNYTVVKEKVSVEEAKALFKERGESYKLEILEGIHPDDRPGLYHHEEYIDMCRGPHVPVMKFCQYFKLMKVSGAYWRGNSDNKMLQRIYGTAWADKKQLNAYLKRLEEAAKRDHRKIGKQLDLYHMQEEAPGMVFWHSNGWTIYRELEKYVREQTEAYDYQEVKAPQILDRALWEKSGHWGKYKDNMFCTSSENRDYAIKPMNCPGHLQIFNQGLKSYRDLPLRMAEFGSCHRNEPSGSLHGLMRVRAFTQDDAHIFCTEEQILDEVSACIQMVFECYKTFGFDDIAVKLSTRPDQRVGDDATWDKAEAALANALTTNNINYGVLPGEGAFYGPKIEFTLYDCLGRGWQCGTIQLDFSMPGRLDASFVGEDNERHTPVMIHRAILGSLERFIGILTEEYAGVYPTWLSPKQVVVMNITDKQSAFVDEVVNKLKKSGIRAISDLRNEKIGFKIREHTLKRVPYLLVIGDQEVEAGEVAVRTRKGDDLGKFKVDDFAAYIKEEIITRR</sequence>
<evidence type="ECO:0000255" key="1">
    <source>
        <dbReference type="HAMAP-Rule" id="MF_00184"/>
    </source>
</evidence>
<evidence type="ECO:0000255" key="2">
    <source>
        <dbReference type="PROSITE-ProRule" id="PRU01228"/>
    </source>
</evidence>
<proteinExistence type="inferred from homology"/>
<organism>
    <name type="scientific">Psychromonas ingrahamii (strain DSM 17664 / CCUG 51855 / 37)</name>
    <dbReference type="NCBI Taxonomy" id="357804"/>
    <lineage>
        <taxon>Bacteria</taxon>
        <taxon>Pseudomonadati</taxon>
        <taxon>Pseudomonadota</taxon>
        <taxon>Gammaproteobacteria</taxon>
        <taxon>Alteromonadales</taxon>
        <taxon>Psychromonadaceae</taxon>
        <taxon>Psychromonas</taxon>
    </lineage>
</organism>
<protein>
    <recommendedName>
        <fullName evidence="1">Threonine--tRNA ligase</fullName>
        <ecNumber evidence="1">6.1.1.3</ecNumber>
    </recommendedName>
    <alternativeName>
        <fullName evidence="1">Threonyl-tRNA synthetase</fullName>
        <shortName evidence="1">ThrRS</shortName>
    </alternativeName>
</protein>
<feature type="chain" id="PRO_1000020480" description="Threonine--tRNA ligase">
    <location>
        <begin position="1"/>
        <end position="635"/>
    </location>
</feature>
<feature type="domain" description="TGS" evidence="2">
    <location>
        <begin position="1"/>
        <end position="61"/>
    </location>
</feature>
<feature type="region of interest" description="Catalytic" evidence="1">
    <location>
        <begin position="242"/>
        <end position="533"/>
    </location>
</feature>
<feature type="binding site" evidence="1">
    <location>
        <position position="333"/>
    </location>
    <ligand>
        <name>Zn(2+)</name>
        <dbReference type="ChEBI" id="CHEBI:29105"/>
    </ligand>
</feature>
<feature type="binding site" evidence="1">
    <location>
        <position position="384"/>
    </location>
    <ligand>
        <name>Zn(2+)</name>
        <dbReference type="ChEBI" id="CHEBI:29105"/>
    </ligand>
</feature>
<feature type="binding site" evidence="1">
    <location>
        <position position="510"/>
    </location>
    <ligand>
        <name>Zn(2+)</name>
        <dbReference type="ChEBI" id="CHEBI:29105"/>
    </ligand>
</feature>
<keyword id="KW-0030">Aminoacyl-tRNA synthetase</keyword>
<keyword id="KW-0067">ATP-binding</keyword>
<keyword id="KW-0963">Cytoplasm</keyword>
<keyword id="KW-0436">Ligase</keyword>
<keyword id="KW-0479">Metal-binding</keyword>
<keyword id="KW-0547">Nucleotide-binding</keyword>
<keyword id="KW-0648">Protein biosynthesis</keyword>
<keyword id="KW-1185">Reference proteome</keyword>
<keyword id="KW-0694">RNA-binding</keyword>
<keyword id="KW-0820">tRNA-binding</keyword>
<keyword id="KW-0862">Zinc</keyword>
<comment type="function">
    <text evidence="1">Catalyzes the attachment of threonine to tRNA(Thr) in a two-step reaction: L-threonine is first activated by ATP to form Thr-AMP and then transferred to the acceptor end of tRNA(Thr). Also edits incorrectly charged L-seryl-tRNA(Thr).</text>
</comment>
<comment type="catalytic activity">
    <reaction evidence="1">
        <text>tRNA(Thr) + L-threonine + ATP = L-threonyl-tRNA(Thr) + AMP + diphosphate + H(+)</text>
        <dbReference type="Rhea" id="RHEA:24624"/>
        <dbReference type="Rhea" id="RHEA-COMP:9670"/>
        <dbReference type="Rhea" id="RHEA-COMP:9704"/>
        <dbReference type="ChEBI" id="CHEBI:15378"/>
        <dbReference type="ChEBI" id="CHEBI:30616"/>
        <dbReference type="ChEBI" id="CHEBI:33019"/>
        <dbReference type="ChEBI" id="CHEBI:57926"/>
        <dbReference type="ChEBI" id="CHEBI:78442"/>
        <dbReference type="ChEBI" id="CHEBI:78534"/>
        <dbReference type="ChEBI" id="CHEBI:456215"/>
        <dbReference type="EC" id="6.1.1.3"/>
    </reaction>
</comment>
<comment type="cofactor">
    <cofactor evidence="1">
        <name>Zn(2+)</name>
        <dbReference type="ChEBI" id="CHEBI:29105"/>
    </cofactor>
    <text evidence="1">Binds 1 zinc ion per subunit.</text>
</comment>
<comment type="subunit">
    <text evidence="1">Homodimer.</text>
</comment>
<comment type="subcellular location">
    <subcellularLocation>
        <location evidence="1">Cytoplasm</location>
    </subcellularLocation>
</comment>
<comment type="similarity">
    <text evidence="1">Belongs to the class-II aminoacyl-tRNA synthetase family.</text>
</comment>
<reference key="1">
    <citation type="journal article" date="2008" name="BMC Genomics">
        <title>Genomics of an extreme psychrophile, Psychromonas ingrahamii.</title>
        <authorList>
            <person name="Riley M."/>
            <person name="Staley J.T."/>
            <person name="Danchin A."/>
            <person name="Wang T.Z."/>
            <person name="Brettin T.S."/>
            <person name="Hauser L.J."/>
            <person name="Land M.L."/>
            <person name="Thompson L.S."/>
        </authorList>
    </citation>
    <scope>NUCLEOTIDE SEQUENCE [LARGE SCALE GENOMIC DNA]</scope>
    <source>
        <strain>DSM 17664 / CCUG 51855 / 37</strain>
    </source>
</reference>
<dbReference type="EC" id="6.1.1.3" evidence="1"/>
<dbReference type="EMBL" id="CP000510">
    <property type="protein sequence ID" value="ABM03960.1"/>
    <property type="molecule type" value="Genomic_DNA"/>
</dbReference>
<dbReference type="RefSeq" id="WP_011770520.1">
    <property type="nucleotide sequence ID" value="NC_008709.1"/>
</dbReference>
<dbReference type="SMR" id="A1SWU5"/>
<dbReference type="STRING" id="357804.Ping_2219"/>
<dbReference type="KEGG" id="pin:Ping_2219"/>
<dbReference type="eggNOG" id="COG0441">
    <property type="taxonomic scope" value="Bacteria"/>
</dbReference>
<dbReference type="HOGENOM" id="CLU_008554_0_1_6"/>
<dbReference type="OrthoDB" id="9802304at2"/>
<dbReference type="Proteomes" id="UP000000639">
    <property type="component" value="Chromosome"/>
</dbReference>
<dbReference type="GO" id="GO:0005829">
    <property type="term" value="C:cytosol"/>
    <property type="evidence" value="ECO:0007669"/>
    <property type="project" value="TreeGrafter"/>
</dbReference>
<dbReference type="GO" id="GO:0005524">
    <property type="term" value="F:ATP binding"/>
    <property type="evidence" value="ECO:0007669"/>
    <property type="project" value="UniProtKB-UniRule"/>
</dbReference>
<dbReference type="GO" id="GO:0046872">
    <property type="term" value="F:metal ion binding"/>
    <property type="evidence" value="ECO:0007669"/>
    <property type="project" value="UniProtKB-KW"/>
</dbReference>
<dbReference type="GO" id="GO:0004829">
    <property type="term" value="F:threonine-tRNA ligase activity"/>
    <property type="evidence" value="ECO:0007669"/>
    <property type="project" value="UniProtKB-UniRule"/>
</dbReference>
<dbReference type="GO" id="GO:0000049">
    <property type="term" value="F:tRNA binding"/>
    <property type="evidence" value="ECO:0007669"/>
    <property type="project" value="UniProtKB-KW"/>
</dbReference>
<dbReference type="GO" id="GO:0006435">
    <property type="term" value="P:threonyl-tRNA aminoacylation"/>
    <property type="evidence" value="ECO:0007669"/>
    <property type="project" value="UniProtKB-UniRule"/>
</dbReference>
<dbReference type="CDD" id="cd01667">
    <property type="entry name" value="TGS_ThrRS"/>
    <property type="match status" value="1"/>
</dbReference>
<dbReference type="CDD" id="cd00860">
    <property type="entry name" value="ThrRS_anticodon"/>
    <property type="match status" value="1"/>
</dbReference>
<dbReference type="CDD" id="cd00771">
    <property type="entry name" value="ThrRS_core"/>
    <property type="match status" value="1"/>
</dbReference>
<dbReference type="FunFam" id="3.10.20.30:FF:000005">
    <property type="entry name" value="Threonine--tRNA ligase"/>
    <property type="match status" value="1"/>
</dbReference>
<dbReference type="FunFam" id="3.30.54.20:FF:000002">
    <property type="entry name" value="Threonine--tRNA ligase"/>
    <property type="match status" value="1"/>
</dbReference>
<dbReference type="FunFam" id="3.30.930.10:FF:000002">
    <property type="entry name" value="Threonine--tRNA ligase"/>
    <property type="match status" value="1"/>
</dbReference>
<dbReference type="FunFam" id="3.40.50.800:FF:000001">
    <property type="entry name" value="Threonine--tRNA ligase"/>
    <property type="match status" value="1"/>
</dbReference>
<dbReference type="FunFam" id="3.30.980.10:FF:000005">
    <property type="entry name" value="Threonyl-tRNA synthetase, mitochondrial"/>
    <property type="match status" value="1"/>
</dbReference>
<dbReference type="Gene3D" id="3.10.20.30">
    <property type="match status" value="1"/>
</dbReference>
<dbReference type="Gene3D" id="3.30.54.20">
    <property type="match status" value="1"/>
</dbReference>
<dbReference type="Gene3D" id="3.40.50.800">
    <property type="entry name" value="Anticodon-binding domain"/>
    <property type="match status" value="1"/>
</dbReference>
<dbReference type="Gene3D" id="3.30.930.10">
    <property type="entry name" value="Bira Bifunctional Protein, Domain 2"/>
    <property type="match status" value="1"/>
</dbReference>
<dbReference type="Gene3D" id="3.30.980.10">
    <property type="entry name" value="Threonyl-trna Synthetase, Chain A, domain 2"/>
    <property type="match status" value="1"/>
</dbReference>
<dbReference type="HAMAP" id="MF_00184">
    <property type="entry name" value="Thr_tRNA_synth"/>
    <property type="match status" value="1"/>
</dbReference>
<dbReference type="InterPro" id="IPR002314">
    <property type="entry name" value="aa-tRNA-synt_IIb"/>
</dbReference>
<dbReference type="InterPro" id="IPR006195">
    <property type="entry name" value="aa-tRNA-synth_II"/>
</dbReference>
<dbReference type="InterPro" id="IPR045864">
    <property type="entry name" value="aa-tRNA-synth_II/BPL/LPL"/>
</dbReference>
<dbReference type="InterPro" id="IPR004154">
    <property type="entry name" value="Anticodon-bd"/>
</dbReference>
<dbReference type="InterPro" id="IPR036621">
    <property type="entry name" value="Anticodon-bd_dom_sf"/>
</dbReference>
<dbReference type="InterPro" id="IPR012675">
    <property type="entry name" value="Beta-grasp_dom_sf"/>
</dbReference>
<dbReference type="InterPro" id="IPR004095">
    <property type="entry name" value="TGS"/>
</dbReference>
<dbReference type="InterPro" id="IPR012676">
    <property type="entry name" value="TGS-like"/>
</dbReference>
<dbReference type="InterPro" id="IPR002320">
    <property type="entry name" value="Thr-tRNA-ligase_IIa"/>
</dbReference>
<dbReference type="InterPro" id="IPR018163">
    <property type="entry name" value="Thr/Ala-tRNA-synth_IIc_edit"/>
</dbReference>
<dbReference type="InterPro" id="IPR047246">
    <property type="entry name" value="ThrRS_anticodon"/>
</dbReference>
<dbReference type="InterPro" id="IPR033728">
    <property type="entry name" value="ThrRS_core"/>
</dbReference>
<dbReference type="InterPro" id="IPR012947">
    <property type="entry name" value="tRNA_SAD"/>
</dbReference>
<dbReference type="NCBIfam" id="TIGR00418">
    <property type="entry name" value="thrS"/>
    <property type="match status" value="1"/>
</dbReference>
<dbReference type="PANTHER" id="PTHR11451:SF44">
    <property type="entry name" value="THREONINE--TRNA LIGASE, CHLOROPLASTIC_MITOCHONDRIAL 2"/>
    <property type="match status" value="1"/>
</dbReference>
<dbReference type="PANTHER" id="PTHR11451">
    <property type="entry name" value="THREONINE-TRNA LIGASE"/>
    <property type="match status" value="1"/>
</dbReference>
<dbReference type="Pfam" id="PF03129">
    <property type="entry name" value="HGTP_anticodon"/>
    <property type="match status" value="1"/>
</dbReference>
<dbReference type="Pfam" id="PF02824">
    <property type="entry name" value="TGS"/>
    <property type="match status" value="1"/>
</dbReference>
<dbReference type="Pfam" id="PF00587">
    <property type="entry name" value="tRNA-synt_2b"/>
    <property type="match status" value="1"/>
</dbReference>
<dbReference type="Pfam" id="PF07973">
    <property type="entry name" value="tRNA_SAD"/>
    <property type="match status" value="1"/>
</dbReference>
<dbReference type="PRINTS" id="PR01047">
    <property type="entry name" value="TRNASYNTHTHR"/>
</dbReference>
<dbReference type="SMART" id="SM00863">
    <property type="entry name" value="tRNA_SAD"/>
    <property type="match status" value="1"/>
</dbReference>
<dbReference type="SUPFAM" id="SSF52954">
    <property type="entry name" value="Class II aaRS ABD-related"/>
    <property type="match status" value="1"/>
</dbReference>
<dbReference type="SUPFAM" id="SSF55681">
    <property type="entry name" value="Class II aaRS and biotin synthetases"/>
    <property type="match status" value="1"/>
</dbReference>
<dbReference type="SUPFAM" id="SSF81271">
    <property type="entry name" value="TGS-like"/>
    <property type="match status" value="1"/>
</dbReference>
<dbReference type="SUPFAM" id="SSF55186">
    <property type="entry name" value="ThrRS/AlaRS common domain"/>
    <property type="match status" value="1"/>
</dbReference>
<dbReference type="PROSITE" id="PS50862">
    <property type="entry name" value="AA_TRNA_LIGASE_II"/>
    <property type="match status" value="1"/>
</dbReference>
<dbReference type="PROSITE" id="PS51880">
    <property type="entry name" value="TGS"/>
    <property type="match status" value="1"/>
</dbReference>
<accession>A1SWU5</accession>
<gene>
    <name evidence="1" type="primary">thrS</name>
    <name type="ordered locus">Ping_2219</name>
</gene>
<name>SYT_PSYIN</name>